<comment type="function">
    <text evidence="1 2">Component of the viral envelope that plays a central role in virus morphogenesis and assembly via its interactions with other viral proteins.</text>
</comment>
<comment type="subunit">
    <text evidence="1 2">Homomultimer. Interacts with envelope E protein in the budding compartment of the host cell, which is located between endoplasmic reticulum and the Golgi complex. Forms a complex with HE and S proteins. Interacts with nucleocapsid N protein. This interaction probably participates in RNA packaging into the virus.</text>
</comment>
<comment type="subcellular location">
    <subcellularLocation>
        <location evidence="1">Virion membrane</location>
        <topology evidence="1">Multi-pass membrane protein</topology>
    </subcellularLocation>
    <subcellularLocation>
        <location evidence="1">Host Golgi apparatus membrane</location>
        <topology evidence="1">Multi-pass membrane protein</topology>
    </subcellularLocation>
    <text evidence="1">Largely embedded in the lipid bilayer.</text>
</comment>
<comment type="similarity">
    <text evidence="1">Belongs to the betacoronaviruses M protein family.</text>
</comment>
<feature type="chain" id="PRO_0000106028" description="Membrane protein">
    <location>
        <begin position="1"/>
        <end position="230"/>
    </location>
</feature>
<feature type="topological domain" description="Virion surface" evidence="1">
    <location>
        <begin position="1"/>
        <end position="24"/>
    </location>
</feature>
<feature type="transmembrane region" description="Helical" evidence="1">
    <location>
        <begin position="25"/>
        <end position="45"/>
    </location>
</feature>
<feature type="topological domain" description="Intravirion" evidence="1">
    <location>
        <begin position="46"/>
        <end position="55"/>
    </location>
</feature>
<feature type="transmembrane region" description="Helical" evidence="1">
    <location>
        <begin position="56"/>
        <end position="76"/>
    </location>
</feature>
<feature type="topological domain" description="Virion surface" evidence="1">
    <location>
        <begin position="77"/>
        <end position="84"/>
    </location>
</feature>
<feature type="transmembrane region" description="Helical" evidence="1">
    <location>
        <begin position="85"/>
        <end position="105"/>
    </location>
</feature>
<feature type="topological domain" description="Intravirion" evidence="1">
    <location>
        <begin position="106"/>
        <end position="228"/>
    </location>
</feature>
<organismHost>
    <name type="scientific">Bos taurus</name>
    <name type="common">Bovine</name>
    <dbReference type="NCBI Taxonomy" id="9913"/>
</organismHost>
<organism>
    <name type="scientific">Bovine coronavirus (strain LY-138)</name>
    <name type="common">BCoV</name>
    <name type="synonym">BCV</name>
    <dbReference type="NCBI Taxonomy" id="11131"/>
    <lineage>
        <taxon>Viruses</taxon>
        <taxon>Riboviria</taxon>
        <taxon>Orthornavirae</taxon>
        <taxon>Pisuviricota</taxon>
        <taxon>Pisoniviricetes</taxon>
        <taxon>Nidovirales</taxon>
        <taxon>Cornidovirineae</taxon>
        <taxon>Coronaviridae</taxon>
        <taxon>Orthocoronavirinae</taxon>
        <taxon>Betacoronavirus</taxon>
        <taxon>Embecovirus</taxon>
        <taxon>Betacoronavirus 1</taxon>
    </lineage>
</organism>
<gene>
    <name evidence="1" type="primary">M</name>
    <name type="ORF">6</name>
</gene>
<protein>
    <recommendedName>
        <fullName evidence="1">Membrane protein</fullName>
        <shortName evidence="1">M protein</shortName>
    </recommendedName>
    <alternativeName>
        <fullName evidence="1">E1 glycoprotein</fullName>
    </alternativeName>
    <alternativeName>
        <fullName evidence="1">Matrix glycoprotein</fullName>
    </alternativeName>
    <alternativeName>
        <fullName evidence="1">Membrane glycoprotein</fullName>
    </alternativeName>
</protein>
<evidence type="ECO:0000255" key="1">
    <source>
        <dbReference type="HAMAP-Rule" id="MF_04202"/>
    </source>
</evidence>
<evidence type="ECO:0000255" key="2">
    <source>
        <dbReference type="PROSITE-ProRule" id="PRU01275"/>
    </source>
</evidence>
<proteinExistence type="inferred from homology"/>
<dbReference type="EMBL" id="AF058942">
    <property type="protein sequence ID" value="AAF25504.1"/>
    <property type="molecule type" value="Genomic_RNA"/>
</dbReference>
<dbReference type="SMR" id="Q9QAR9"/>
<dbReference type="GO" id="GO:0044178">
    <property type="term" value="C:host cell Golgi membrane"/>
    <property type="evidence" value="ECO:0007669"/>
    <property type="project" value="UniProtKB-SubCell"/>
</dbReference>
<dbReference type="GO" id="GO:0016020">
    <property type="term" value="C:membrane"/>
    <property type="evidence" value="ECO:0007669"/>
    <property type="project" value="UniProtKB-UniRule"/>
</dbReference>
<dbReference type="GO" id="GO:0019031">
    <property type="term" value="C:viral envelope"/>
    <property type="evidence" value="ECO:0007669"/>
    <property type="project" value="UniProtKB-UniRule"/>
</dbReference>
<dbReference type="GO" id="GO:0055036">
    <property type="term" value="C:virion membrane"/>
    <property type="evidence" value="ECO:0007669"/>
    <property type="project" value="UniProtKB-SubCell"/>
</dbReference>
<dbReference type="GO" id="GO:0039660">
    <property type="term" value="F:structural constituent of virion"/>
    <property type="evidence" value="ECO:0007669"/>
    <property type="project" value="UniProtKB-UniRule"/>
</dbReference>
<dbReference type="CDD" id="cd21568">
    <property type="entry name" value="HCoV-like_M"/>
    <property type="match status" value="1"/>
</dbReference>
<dbReference type="HAMAP" id="MF_04202">
    <property type="entry name" value="BETA_CORONA_M"/>
    <property type="match status" value="1"/>
</dbReference>
<dbReference type="InterPro" id="IPR002574">
    <property type="entry name" value="M_CoV"/>
</dbReference>
<dbReference type="InterPro" id="IPR044362">
    <property type="entry name" value="M_HCoV-like"/>
</dbReference>
<dbReference type="Pfam" id="PF01635">
    <property type="entry name" value="CoV_M"/>
    <property type="match status" value="1"/>
</dbReference>
<dbReference type="PROSITE" id="PS51927">
    <property type="entry name" value="COV_M"/>
    <property type="match status" value="1"/>
</dbReference>
<reference key="1">
    <citation type="journal article" date="1998" name="Virus Genes">
        <title>Nucleotide and predicted amino acid sequences of all genes encoded by the 3' genomic portion (9.5 kb) of respiratory bovine coronaviruses and comparisons among respiratory and enteric coronaviruses.</title>
        <authorList>
            <person name="Chouljenko V.N."/>
            <person name="Kousoulas K.G."/>
            <person name="Lin X.Q."/>
            <person name="Storz J."/>
        </authorList>
    </citation>
    <scope>NUCLEOTIDE SEQUENCE [GENOMIC RNA]</scope>
</reference>
<accession>Q9QAR9</accession>
<name>VME1_CVBLY</name>
<keyword id="KW-0325">Glycoprotein</keyword>
<keyword id="KW-1040">Host Golgi apparatus</keyword>
<keyword id="KW-1043">Host membrane</keyword>
<keyword id="KW-0945">Host-virus interaction</keyword>
<keyword id="KW-0472">Membrane</keyword>
<keyword id="KW-0812">Transmembrane</keyword>
<keyword id="KW-1133">Transmembrane helix</keyword>
<keyword id="KW-0261">Viral envelope protein</keyword>
<keyword id="KW-0899">Viral immunoevasion</keyword>
<keyword id="KW-0468">Viral matrix protein</keyword>
<keyword id="KW-0946">Virion</keyword>
<sequence length="230" mass="26400">MSSVTTPAPVYTWTADEAIKFLKEWNFSLGIILLFITIILQFGYTSRSMFVYVIKMIILWLMWPLTIILTIFNCVYALNNVYLGFSIVFTIVAIIMWIVYFVNSIRLFIRTGSWWSFNPETNNLMCIDMKGRMYVRPIIEDYHTLTVTIIRGHLYMQGIKLGTGYSLSDLPAYVTVAKVSHLLTYKRGFLDRIGDTSGFAVYVKSKVGNYRLPSTQKGSGMDTALLRNNI</sequence>